<keyword id="KW-0687">Ribonucleoprotein</keyword>
<keyword id="KW-0689">Ribosomal protein</keyword>
<keyword id="KW-0694">RNA-binding</keyword>
<keyword id="KW-0699">rRNA-binding</keyword>
<accession>B0UX16</accession>
<evidence type="ECO:0000255" key="1">
    <source>
        <dbReference type="HAMAP-Rule" id="MF_01320"/>
    </source>
</evidence>
<evidence type="ECO:0000256" key="2">
    <source>
        <dbReference type="SAM" id="MobiDB-lite"/>
    </source>
</evidence>
<evidence type="ECO:0000305" key="3"/>
<comment type="function">
    <text evidence="1">One of the primary rRNA binding proteins. Required for association of the 30S and 50S subunits to form the 70S ribosome, for tRNA binding and peptide bond formation. It has been suggested to have peptidyltransferase activity; this is somewhat controversial. Makes several contacts with the 16S rRNA in the 70S ribosome.</text>
</comment>
<comment type="subunit">
    <text evidence="1">Part of the 50S ribosomal subunit. Forms a bridge to the 30S subunit in the 70S ribosome.</text>
</comment>
<comment type="similarity">
    <text evidence="1">Belongs to the universal ribosomal protein uL2 family.</text>
</comment>
<organism>
    <name type="scientific">Histophilus somni (strain 2336)</name>
    <name type="common">Haemophilus somnus</name>
    <dbReference type="NCBI Taxonomy" id="228400"/>
    <lineage>
        <taxon>Bacteria</taxon>
        <taxon>Pseudomonadati</taxon>
        <taxon>Pseudomonadota</taxon>
        <taxon>Gammaproteobacteria</taxon>
        <taxon>Pasteurellales</taxon>
        <taxon>Pasteurellaceae</taxon>
        <taxon>Histophilus</taxon>
    </lineage>
</organism>
<feature type="chain" id="PRO_1000086334" description="Large ribosomal subunit protein uL2">
    <location>
        <begin position="1"/>
        <end position="273"/>
    </location>
</feature>
<feature type="region of interest" description="Disordered" evidence="2">
    <location>
        <begin position="221"/>
        <end position="263"/>
    </location>
</feature>
<feature type="compositionally biased region" description="Basic residues" evidence="2">
    <location>
        <begin position="253"/>
        <end position="263"/>
    </location>
</feature>
<protein>
    <recommendedName>
        <fullName evidence="1">Large ribosomal subunit protein uL2</fullName>
    </recommendedName>
    <alternativeName>
        <fullName evidence="3">50S ribosomal protein L2</fullName>
    </alternativeName>
</protein>
<name>RL2_HISS2</name>
<gene>
    <name evidence="1" type="primary">rplB</name>
    <name type="ordered locus">HSM_1955</name>
</gene>
<dbReference type="EMBL" id="CP000947">
    <property type="protein sequence ID" value="ACA31749.1"/>
    <property type="molecule type" value="Genomic_DNA"/>
</dbReference>
<dbReference type="RefSeq" id="WP_012341028.1">
    <property type="nucleotide sequence ID" value="NC_010519.1"/>
</dbReference>
<dbReference type="SMR" id="B0UX16"/>
<dbReference type="STRING" id="228400.HSM_1955"/>
<dbReference type="GeneID" id="31488266"/>
<dbReference type="KEGG" id="hsm:HSM_1955"/>
<dbReference type="HOGENOM" id="CLU_036235_2_1_6"/>
<dbReference type="GO" id="GO:0015934">
    <property type="term" value="C:large ribosomal subunit"/>
    <property type="evidence" value="ECO:0007669"/>
    <property type="project" value="InterPro"/>
</dbReference>
<dbReference type="GO" id="GO:0019843">
    <property type="term" value="F:rRNA binding"/>
    <property type="evidence" value="ECO:0007669"/>
    <property type="project" value="UniProtKB-UniRule"/>
</dbReference>
<dbReference type="GO" id="GO:0003735">
    <property type="term" value="F:structural constituent of ribosome"/>
    <property type="evidence" value="ECO:0007669"/>
    <property type="project" value="InterPro"/>
</dbReference>
<dbReference type="GO" id="GO:0016740">
    <property type="term" value="F:transferase activity"/>
    <property type="evidence" value="ECO:0007669"/>
    <property type="project" value="InterPro"/>
</dbReference>
<dbReference type="GO" id="GO:0002181">
    <property type="term" value="P:cytoplasmic translation"/>
    <property type="evidence" value="ECO:0007669"/>
    <property type="project" value="TreeGrafter"/>
</dbReference>
<dbReference type="FunFam" id="2.30.30.30:FF:000001">
    <property type="entry name" value="50S ribosomal protein L2"/>
    <property type="match status" value="1"/>
</dbReference>
<dbReference type="FunFam" id="2.40.50.140:FF:000003">
    <property type="entry name" value="50S ribosomal protein L2"/>
    <property type="match status" value="1"/>
</dbReference>
<dbReference type="FunFam" id="4.10.950.10:FF:000001">
    <property type="entry name" value="50S ribosomal protein L2"/>
    <property type="match status" value="1"/>
</dbReference>
<dbReference type="Gene3D" id="2.30.30.30">
    <property type="match status" value="1"/>
</dbReference>
<dbReference type="Gene3D" id="2.40.50.140">
    <property type="entry name" value="Nucleic acid-binding proteins"/>
    <property type="match status" value="1"/>
</dbReference>
<dbReference type="Gene3D" id="4.10.950.10">
    <property type="entry name" value="Ribosomal protein L2, domain 3"/>
    <property type="match status" value="1"/>
</dbReference>
<dbReference type="HAMAP" id="MF_01320_B">
    <property type="entry name" value="Ribosomal_uL2_B"/>
    <property type="match status" value="1"/>
</dbReference>
<dbReference type="InterPro" id="IPR012340">
    <property type="entry name" value="NA-bd_OB-fold"/>
</dbReference>
<dbReference type="InterPro" id="IPR014722">
    <property type="entry name" value="Rib_uL2_dom2"/>
</dbReference>
<dbReference type="InterPro" id="IPR002171">
    <property type="entry name" value="Ribosomal_uL2"/>
</dbReference>
<dbReference type="InterPro" id="IPR005880">
    <property type="entry name" value="Ribosomal_uL2_bac/org-type"/>
</dbReference>
<dbReference type="InterPro" id="IPR022669">
    <property type="entry name" value="Ribosomal_uL2_C"/>
</dbReference>
<dbReference type="InterPro" id="IPR022671">
    <property type="entry name" value="Ribosomal_uL2_CS"/>
</dbReference>
<dbReference type="InterPro" id="IPR014726">
    <property type="entry name" value="Ribosomal_uL2_dom3"/>
</dbReference>
<dbReference type="InterPro" id="IPR022666">
    <property type="entry name" value="Ribosomal_uL2_RNA-bd_dom"/>
</dbReference>
<dbReference type="InterPro" id="IPR008991">
    <property type="entry name" value="Translation_prot_SH3-like_sf"/>
</dbReference>
<dbReference type="NCBIfam" id="TIGR01171">
    <property type="entry name" value="rplB_bact"/>
    <property type="match status" value="1"/>
</dbReference>
<dbReference type="PANTHER" id="PTHR13691:SF5">
    <property type="entry name" value="LARGE RIBOSOMAL SUBUNIT PROTEIN UL2M"/>
    <property type="match status" value="1"/>
</dbReference>
<dbReference type="PANTHER" id="PTHR13691">
    <property type="entry name" value="RIBOSOMAL PROTEIN L2"/>
    <property type="match status" value="1"/>
</dbReference>
<dbReference type="Pfam" id="PF00181">
    <property type="entry name" value="Ribosomal_L2"/>
    <property type="match status" value="1"/>
</dbReference>
<dbReference type="Pfam" id="PF03947">
    <property type="entry name" value="Ribosomal_L2_C"/>
    <property type="match status" value="1"/>
</dbReference>
<dbReference type="PIRSF" id="PIRSF002158">
    <property type="entry name" value="Ribosomal_L2"/>
    <property type="match status" value="1"/>
</dbReference>
<dbReference type="SMART" id="SM01383">
    <property type="entry name" value="Ribosomal_L2"/>
    <property type="match status" value="1"/>
</dbReference>
<dbReference type="SMART" id="SM01382">
    <property type="entry name" value="Ribosomal_L2_C"/>
    <property type="match status" value="1"/>
</dbReference>
<dbReference type="SUPFAM" id="SSF50249">
    <property type="entry name" value="Nucleic acid-binding proteins"/>
    <property type="match status" value="1"/>
</dbReference>
<dbReference type="SUPFAM" id="SSF50104">
    <property type="entry name" value="Translation proteins SH3-like domain"/>
    <property type="match status" value="1"/>
</dbReference>
<dbReference type="PROSITE" id="PS00467">
    <property type="entry name" value="RIBOSOMAL_L2"/>
    <property type="match status" value="1"/>
</dbReference>
<sequence length="273" mass="30004">MAIVKCKPTSAGRRHVVKIVNPELHKGKPYAPLLGTKSKTGGRNNLGRITTRHIGGGHKQHYRVIDFKRNKLDIPAVVERLEYDPNRSANIALVLYKDGERRYILAPKGLSAGDQIQSGINAPIKIGNSLPMRNIPVGSTVHNVELKPGKGGQIARSAGAYVQIIAREGNYVTLRLRSGEMRKVLSECVATIGEVGNSEHMLRVLGKAGANRWRGVRPTVRGTAMNPVDHPHGGGEGRNFGKHPVTPWGVQTKGKKTRHNKRTDKYIVRRRGK</sequence>
<proteinExistence type="inferred from homology"/>
<reference key="1">
    <citation type="submission" date="2008-02" db="EMBL/GenBank/DDBJ databases">
        <title>Complete sequence of Haemophilus somnus 2336.</title>
        <authorList>
            <consortium name="US DOE Joint Genome Institute"/>
            <person name="Siddaramappa S."/>
            <person name="Duncan A.J."/>
            <person name="Challacombe J.F."/>
            <person name="Rainey D."/>
            <person name="Gillaspy A.F."/>
            <person name="Carson M."/>
            <person name="Gipson J."/>
            <person name="Gipson M."/>
            <person name="Bruce D."/>
            <person name="Detter J.C."/>
            <person name="Han C.S."/>
            <person name="Land M."/>
            <person name="Tapia R."/>
            <person name="Thompson L.S."/>
            <person name="Orvis J."/>
            <person name="Zaitshik J."/>
            <person name="Barnes G."/>
            <person name="Brettin T.S."/>
            <person name="Dyer D.W."/>
            <person name="Inzana T.J."/>
        </authorList>
    </citation>
    <scope>NUCLEOTIDE SEQUENCE [LARGE SCALE GENOMIC DNA]</scope>
    <source>
        <strain>2336</strain>
    </source>
</reference>